<gene>
    <name type="primary">CAPZA3</name>
    <name type="synonym">CAPAA3</name>
    <name type="synonym">GSG3</name>
</gene>
<comment type="function">
    <text evidence="1">F-actin-capping proteins bind in a Ca(2+)-independent manner to the fast growing ends of actin filaments (barbed end) thereby blocking the exchange of subunits at these ends. Unlike other capping proteins (such as gelsolin and severin), these proteins do not sever actin filaments. May play a role in the morphogenesis of spermatid (By similarity).</text>
</comment>
<comment type="subunit">
    <text evidence="1 5">Component of the F-actin capping complex, composed of a heterodimer of an alpha and a beta subunit (By similarity). Component of the WASH complex, composed of F-actin-capping protein subunit alpha (CAPZA1, CAPZA2 or CAPZA3), F-actin-capping protein subunit beta (CAPZB), WASH (WASHC1, WASH2P, WASH3P, WASH4P, WASH5P or WASH6P), WASHC2 (WASHC2A or WASHC2C), WASHC3, WASHC4 and WASHC5.</text>
</comment>
<comment type="subcellular location">
    <subcellularLocation>
        <location evidence="2">Cytoplasm</location>
        <location evidence="2">Cytoskeleton</location>
    </subcellularLocation>
</comment>
<comment type="tissue specificity">
    <text evidence="4">Expressed exclusively in testis and sperm. Highest expression is found in the neck region of ejaculated sperm with lower levels found in the tail and postacrosome region.</text>
</comment>
<comment type="similarity">
    <text evidence="6">Belongs to the F-actin-capping protein alpha subunit family.</text>
</comment>
<proteinExistence type="evidence at protein level"/>
<reference key="1">
    <citation type="journal article" date="2002" name="Mol. Hum. Reprod.">
        <title>Molecular cloning and characterization of the human orthologue of male germ cell-specific actin capping protein alpha3 (cpalpha3).</title>
        <authorList>
            <person name="Miyagawa Y."/>
            <person name="Tanaka H."/>
            <person name="Iguchi N."/>
            <person name="Kitamura K."/>
            <person name="Nakamura Y."/>
            <person name="Takahashi T."/>
            <person name="Matsumiya K."/>
            <person name="Okuyama A."/>
            <person name="Nishimune Y."/>
        </authorList>
    </citation>
    <scope>NUCLEOTIDE SEQUENCE [MRNA]</scope>
    <scope>TISSUE SPECIFICITY</scope>
    <source>
        <tissue>Testis</tissue>
    </source>
</reference>
<reference key="2">
    <citation type="journal article" date="2004" name="Nat. Genet.">
        <title>Complete sequencing and characterization of 21,243 full-length human cDNAs.</title>
        <authorList>
            <person name="Ota T."/>
            <person name="Suzuki Y."/>
            <person name="Nishikawa T."/>
            <person name="Otsuki T."/>
            <person name="Sugiyama T."/>
            <person name="Irie R."/>
            <person name="Wakamatsu A."/>
            <person name="Hayashi K."/>
            <person name="Sato H."/>
            <person name="Nagai K."/>
            <person name="Kimura K."/>
            <person name="Makita H."/>
            <person name="Sekine M."/>
            <person name="Obayashi M."/>
            <person name="Nishi T."/>
            <person name="Shibahara T."/>
            <person name="Tanaka T."/>
            <person name="Ishii S."/>
            <person name="Yamamoto J."/>
            <person name="Saito K."/>
            <person name="Kawai Y."/>
            <person name="Isono Y."/>
            <person name="Nakamura Y."/>
            <person name="Nagahari K."/>
            <person name="Murakami K."/>
            <person name="Yasuda T."/>
            <person name="Iwayanagi T."/>
            <person name="Wagatsuma M."/>
            <person name="Shiratori A."/>
            <person name="Sudo H."/>
            <person name="Hosoiri T."/>
            <person name="Kaku Y."/>
            <person name="Kodaira H."/>
            <person name="Kondo H."/>
            <person name="Sugawara M."/>
            <person name="Takahashi M."/>
            <person name="Kanda K."/>
            <person name="Yokoi T."/>
            <person name="Furuya T."/>
            <person name="Kikkawa E."/>
            <person name="Omura Y."/>
            <person name="Abe K."/>
            <person name="Kamihara K."/>
            <person name="Katsuta N."/>
            <person name="Sato K."/>
            <person name="Tanikawa M."/>
            <person name="Yamazaki M."/>
            <person name="Ninomiya K."/>
            <person name="Ishibashi T."/>
            <person name="Yamashita H."/>
            <person name="Murakawa K."/>
            <person name="Fujimori K."/>
            <person name="Tanai H."/>
            <person name="Kimata M."/>
            <person name="Watanabe M."/>
            <person name="Hiraoka S."/>
            <person name="Chiba Y."/>
            <person name="Ishida S."/>
            <person name="Ono Y."/>
            <person name="Takiguchi S."/>
            <person name="Watanabe S."/>
            <person name="Yosida M."/>
            <person name="Hotuta T."/>
            <person name="Kusano J."/>
            <person name="Kanehori K."/>
            <person name="Takahashi-Fujii A."/>
            <person name="Hara H."/>
            <person name="Tanase T.-O."/>
            <person name="Nomura Y."/>
            <person name="Togiya S."/>
            <person name="Komai F."/>
            <person name="Hara R."/>
            <person name="Takeuchi K."/>
            <person name="Arita M."/>
            <person name="Imose N."/>
            <person name="Musashino K."/>
            <person name="Yuuki H."/>
            <person name="Oshima A."/>
            <person name="Sasaki N."/>
            <person name="Aotsuka S."/>
            <person name="Yoshikawa Y."/>
            <person name="Matsunawa H."/>
            <person name="Ichihara T."/>
            <person name="Shiohata N."/>
            <person name="Sano S."/>
            <person name="Moriya S."/>
            <person name="Momiyama H."/>
            <person name="Satoh N."/>
            <person name="Takami S."/>
            <person name="Terashima Y."/>
            <person name="Suzuki O."/>
            <person name="Nakagawa S."/>
            <person name="Senoh A."/>
            <person name="Mizoguchi H."/>
            <person name="Goto Y."/>
            <person name="Shimizu F."/>
            <person name="Wakebe H."/>
            <person name="Hishigaki H."/>
            <person name="Watanabe T."/>
            <person name="Sugiyama A."/>
            <person name="Takemoto M."/>
            <person name="Kawakami B."/>
            <person name="Yamazaki M."/>
            <person name="Watanabe K."/>
            <person name="Kumagai A."/>
            <person name="Itakura S."/>
            <person name="Fukuzumi Y."/>
            <person name="Fujimori Y."/>
            <person name="Komiyama M."/>
            <person name="Tashiro H."/>
            <person name="Tanigami A."/>
            <person name="Fujiwara T."/>
            <person name="Ono T."/>
            <person name="Yamada K."/>
            <person name="Fujii Y."/>
            <person name="Ozaki K."/>
            <person name="Hirao M."/>
            <person name="Ohmori Y."/>
            <person name="Kawabata A."/>
            <person name="Hikiji T."/>
            <person name="Kobatake N."/>
            <person name="Inagaki H."/>
            <person name="Ikema Y."/>
            <person name="Okamoto S."/>
            <person name="Okitani R."/>
            <person name="Kawakami T."/>
            <person name="Noguchi S."/>
            <person name="Itoh T."/>
            <person name="Shigeta K."/>
            <person name="Senba T."/>
            <person name="Matsumura K."/>
            <person name="Nakajima Y."/>
            <person name="Mizuno T."/>
            <person name="Morinaga M."/>
            <person name="Sasaki M."/>
            <person name="Togashi T."/>
            <person name="Oyama M."/>
            <person name="Hata H."/>
            <person name="Watanabe M."/>
            <person name="Komatsu T."/>
            <person name="Mizushima-Sugano J."/>
            <person name="Satoh T."/>
            <person name="Shirai Y."/>
            <person name="Takahashi Y."/>
            <person name="Nakagawa K."/>
            <person name="Okumura K."/>
            <person name="Nagase T."/>
            <person name="Nomura N."/>
            <person name="Kikuchi H."/>
            <person name="Masuho Y."/>
            <person name="Yamashita R."/>
            <person name="Nakai K."/>
            <person name="Yada T."/>
            <person name="Nakamura Y."/>
            <person name="Ohara O."/>
            <person name="Isogai T."/>
            <person name="Sugano S."/>
        </authorList>
    </citation>
    <scope>NUCLEOTIDE SEQUENCE [LARGE SCALE MRNA]</scope>
    <source>
        <tissue>Testis</tissue>
    </source>
</reference>
<reference key="3">
    <citation type="journal article" date="2004" name="Genome Res.">
        <title>The status, quality, and expansion of the NIH full-length cDNA project: the Mammalian Gene Collection (MGC).</title>
        <authorList>
            <consortium name="The MGC Project Team"/>
        </authorList>
    </citation>
    <scope>NUCLEOTIDE SEQUENCE [LARGE SCALE MRNA]</scope>
    <source>
        <tissue>Testis</tissue>
    </source>
</reference>
<reference key="4">
    <citation type="journal article" date="2009" name="Dev. Cell">
        <title>The Arp2/3 activator WASH controls the fission of endosomes through a large multiprotein complex.</title>
        <authorList>
            <person name="Derivery E."/>
            <person name="Sousa C."/>
            <person name="Gautier J.J."/>
            <person name="Lombard B."/>
            <person name="Loew D."/>
            <person name="Gautreau A."/>
        </authorList>
    </citation>
    <scope>IDENTIFICATION IN THE WASH COMPLEX</scope>
</reference>
<organism>
    <name type="scientific">Homo sapiens</name>
    <name type="common">Human</name>
    <dbReference type="NCBI Taxonomy" id="9606"/>
    <lineage>
        <taxon>Eukaryota</taxon>
        <taxon>Metazoa</taxon>
        <taxon>Chordata</taxon>
        <taxon>Craniata</taxon>
        <taxon>Vertebrata</taxon>
        <taxon>Euteleostomi</taxon>
        <taxon>Mammalia</taxon>
        <taxon>Eutheria</taxon>
        <taxon>Euarchontoglires</taxon>
        <taxon>Primates</taxon>
        <taxon>Haplorrhini</taxon>
        <taxon>Catarrhini</taxon>
        <taxon>Hominidae</taxon>
        <taxon>Homo</taxon>
    </lineage>
</organism>
<sequence length="299" mass="35025">MTLSVLSRKDKERVIRRLLLQAPPGEFVNAFDDLCLLIRDEKLMHHQGECAGHQHCQKYSVPLCIDGNPVLLSHHNVMGDYRFFDHQSKLSFKYDLLQNQLKDIQSHGIIQNEAEYLRVVLLCALKLYVNDHYPKGNCNMLRKTVKSKEYLIACIEDHNYETGECWNGLWKSKWIFQVNPFLTQVTGRIFVQAHFFRCVNLHIEISKDLKESLEIVNQAQLALSFARLVEEQENKFQAAVLEELQELSNEALRKILRRDLPVTRTLIDWHRILSDLNLVMYPKLGYVIYSRSVLCNWII</sequence>
<accession>Q96KX2</accession>
<accession>Q969J0</accession>
<keyword id="KW-0117">Actin capping</keyword>
<keyword id="KW-0009">Actin-binding</keyword>
<keyword id="KW-0963">Cytoplasm</keyword>
<keyword id="KW-0206">Cytoskeleton</keyword>
<keyword id="KW-0597">Phosphoprotein</keyword>
<keyword id="KW-1267">Proteomics identification</keyword>
<keyword id="KW-1185">Reference proteome</keyword>
<dbReference type="EMBL" id="AB053259">
    <property type="protein sequence ID" value="BAB61901.1"/>
    <property type="molecule type" value="mRNA"/>
</dbReference>
<dbReference type="EMBL" id="AK058174">
    <property type="protein sequence ID" value="BAB71703.1"/>
    <property type="molecule type" value="mRNA"/>
</dbReference>
<dbReference type="EMBL" id="BC016745">
    <property type="protein sequence ID" value="AAH16745.1"/>
    <property type="molecule type" value="mRNA"/>
</dbReference>
<dbReference type="CCDS" id="CCDS8681.1"/>
<dbReference type="RefSeq" id="NP_201585.1">
    <property type="nucleotide sequence ID" value="NM_033328.3"/>
</dbReference>
<dbReference type="SMR" id="Q96KX2"/>
<dbReference type="BioGRID" id="125049">
    <property type="interactions" value="1"/>
</dbReference>
<dbReference type="CORUM" id="Q96KX2"/>
<dbReference type="FunCoup" id="Q96KX2">
    <property type="interactions" value="249"/>
</dbReference>
<dbReference type="STRING" id="9606.ENSP00000326238"/>
<dbReference type="GlyConnect" id="2866">
    <property type="glycosylation" value="1 O-GlcNAc glycan (1 site)"/>
</dbReference>
<dbReference type="GlyCosmos" id="Q96KX2">
    <property type="glycosylation" value="1 site, 1 glycan"/>
</dbReference>
<dbReference type="GlyGen" id="Q96KX2">
    <property type="glycosylation" value="1 site, 1 O-linked glycan (1 site)"/>
</dbReference>
<dbReference type="iPTMnet" id="Q96KX2"/>
<dbReference type="PhosphoSitePlus" id="Q96KX2"/>
<dbReference type="BioMuta" id="CAPZA3"/>
<dbReference type="DMDM" id="20137887"/>
<dbReference type="MassIVE" id="Q96KX2"/>
<dbReference type="PaxDb" id="9606-ENSP00000326238"/>
<dbReference type="PeptideAtlas" id="Q96KX2"/>
<dbReference type="ProteomicsDB" id="77129"/>
<dbReference type="Antibodypedia" id="23887">
    <property type="antibodies" value="101 antibodies from 23 providers"/>
</dbReference>
<dbReference type="DNASU" id="93661"/>
<dbReference type="Ensembl" id="ENST00000317658.5">
    <property type="protein sequence ID" value="ENSP00000326238.3"/>
    <property type="gene ID" value="ENSG00000177938.5"/>
</dbReference>
<dbReference type="GeneID" id="93661"/>
<dbReference type="KEGG" id="hsa:93661"/>
<dbReference type="MANE-Select" id="ENST00000317658.5">
    <property type="protein sequence ID" value="ENSP00000326238.3"/>
    <property type="RefSeq nucleotide sequence ID" value="NM_033328.3"/>
    <property type="RefSeq protein sequence ID" value="NP_201585.1"/>
</dbReference>
<dbReference type="UCSC" id="uc001rdy.4">
    <property type="organism name" value="human"/>
</dbReference>
<dbReference type="AGR" id="HGNC:24205"/>
<dbReference type="CTD" id="93661"/>
<dbReference type="DisGeNET" id="93661"/>
<dbReference type="GeneCards" id="CAPZA3"/>
<dbReference type="HGNC" id="HGNC:24205">
    <property type="gene designation" value="CAPZA3"/>
</dbReference>
<dbReference type="HPA" id="ENSG00000177938">
    <property type="expression patterns" value="Tissue enriched (testis)"/>
</dbReference>
<dbReference type="MIM" id="608722">
    <property type="type" value="gene"/>
</dbReference>
<dbReference type="neXtProt" id="NX_Q96KX2"/>
<dbReference type="OpenTargets" id="ENSG00000177938"/>
<dbReference type="PharmGKB" id="PA134990260"/>
<dbReference type="VEuPathDB" id="HostDB:ENSG00000177938"/>
<dbReference type="eggNOG" id="KOG0836">
    <property type="taxonomic scope" value="Eukaryota"/>
</dbReference>
<dbReference type="GeneTree" id="ENSGT00950000183119"/>
<dbReference type="HOGENOM" id="CLU_045161_0_0_1"/>
<dbReference type="InParanoid" id="Q96KX2"/>
<dbReference type="OMA" id="HFPAGNC"/>
<dbReference type="OrthoDB" id="340550at2759"/>
<dbReference type="PAN-GO" id="Q96KX2">
    <property type="GO annotations" value="5 GO annotations based on evolutionary models"/>
</dbReference>
<dbReference type="PhylomeDB" id="Q96KX2"/>
<dbReference type="TreeFam" id="TF314822"/>
<dbReference type="PathwayCommons" id="Q96KX2"/>
<dbReference type="Reactome" id="R-HSA-2132295">
    <property type="pathway name" value="MHC class II antigen presentation"/>
</dbReference>
<dbReference type="Reactome" id="R-HSA-3371497">
    <property type="pathway name" value="HSP90 chaperone cycle for steroid hormone receptors (SHR) in the presence of ligand"/>
</dbReference>
<dbReference type="Reactome" id="R-HSA-6807878">
    <property type="pathway name" value="COPI-mediated anterograde transport"/>
</dbReference>
<dbReference type="Reactome" id="R-HSA-6811436">
    <property type="pathway name" value="COPI-independent Golgi-to-ER retrograde traffic"/>
</dbReference>
<dbReference type="SignaLink" id="Q96KX2"/>
<dbReference type="BioGRID-ORCS" id="93661">
    <property type="hits" value="11 hits in 1148 CRISPR screens"/>
</dbReference>
<dbReference type="GenomeRNAi" id="93661"/>
<dbReference type="Pharos" id="Q96KX2">
    <property type="development level" value="Tbio"/>
</dbReference>
<dbReference type="PRO" id="PR:Q96KX2"/>
<dbReference type="Proteomes" id="UP000005640">
    <property type="component" value="Chromosome 12"/>
</dbReference>
<dbReference type="RNAct" id="Q96KX2">
    <property type="molecule type" value="protein"/>
</dbReference>
<dbReference type="Bgee" id="ENSG00000177938">
    <property type="expression patterns" value="Expressed in left testis and 48 other cell types or tissues"/>
</dbReference>
<dbReference type="ExpressionAtlas" id="Q96KX2">
    <property type="expression patterns" value="baseline and differential"/>
</dbReference>
<dbReference type="GO" id="GO:0030863">
    <property type="term" value="C:cortical cytoskeleton"/>
    <property type="evidence" value="ECO:0000318"/>
    <property type="project" value="GO_Central"/>
</dbReference>
<dbReference type="GO" id="GO:0005829">
    <property type="term" value="C:cytosol"/>
    <property type="evidence" value="ECO:0000304"/>
    <property type="project" value="Reactome"/>
</dbReference>
<dbReference type="GO" id="GO:0008290">
    <property type="term" value="C:F-actin capping protein complex"/>
    <property type="evidence" value="ECO:0000318"/>
    <property type="project" value="GO_Central"/>
</dbReference>
<dbReference type="GO" id="GO:0016020">
    <property type="term" value="C:membrane"/>
    <property type="evidence" value="ECO:0007669"/>
    <property type="project" value="Ensembl"/>
</dbReference>
<dbReference type="GO" id="GO:0005634">
    <property type="term" value="C:nucleus"/>
    <property type="evidence" value="ECO:0007005"/>
    <property type="project" value="UniProtKB"/>
</dbReference>
<dbReference type="GO" id="GO:0061827">
    <property type="term" value="C:sperm head"/>
    <property type="evidence" value="ECO:0007669"/>
    <property type="project" value="Ensembl"/>
</dbReference>
<dbReference type="GO" id="GO:0051015">
    <property type="term" value="F:actin filament binding"/>
    <property type="evidence" value="ECO:0000318"/>
    <property type="project" value="GO_Central"/>
</dbReference>
<dbReference type="GO" id="GO:0030036">
    <property type="term" value="P:actin cytoskeleton organization"/>
    <property type="evidence" value="ECO:0000318"/>
    <property type="project" value="GO_Central"/>
</dbReference>
<dbReference type="GO" id="GO:0007015">
    <property type="term" value="P:actin filament organization"/>
    <property type="evidence" value="ECO:0007669"/>
    <property type="project" value="Ensembl"/>
</dbReference>
<dbReference type="GO" id="GO:0051016">
    <property type="term" value="P:barbed-end actin filament capping"/>
    <property type="evidence" value="ECO:0000318"/>
    <property type="project" value="GO_Central"/>
</dbReference>
<dbReference type="GO" id="GO:0007028">
    <property type="term" value="P:cytoplasm organization"/>
    <property type="evidence" value="ECO:0007669"/>
    <property type="project" value="Ensembl"/>
</dbReference>
<dbReference type="GO" id="GO:0007286">
    <property type="term" value="P:spermatid development"/>
    <property type="evidence" value="ECO:0007669"/>
    <property type="project" value="Ensembl"/>
</dbReference>
<dbReference type="FunFam" id="3.30.1140.60:FF:000002">
    <property type="entry name" value="F-actin-capping protein subunit alpha"/>
    <property type="match status" value="1"/>
</dbReference>
<dbReference type="FunFam" id="3.90.1150.210:FF:000003">
    <property type="entry name" value="F-actin-capping protein subunit alpha"/>
    <property type="match status" value="1"/>
</dbReference>
<dbReference type="Gene3D" id="3.30.1140.60">
    <property type="entry name" value="F-actin capping protein, alpha subunit"/>
    <property type="match status" value="1"/>
</dbReference>
<dbReference type="Gene3D" id="3.90.1150.210">
    <property type="entry name" value="F-actin capping protein, beta subunit"/>
    <property type="match status" value="1"/>
</dbReference>
<dbReference type="InterPro" id="IPR002189">
    <property type="entry name" value="CapZ_alpha"/>
</dbReference>
<dbReference type="InterPro" id="IPR037282">
    <property type="entry name" value="CapZ_alpha/beta"/>
</dbReference>
<dbReference type="InterPro" id="IPR042276">
    <property type="entry name" value="CapZ_alpha/beta_2"/>
</dbReference>
<dbReference type="InterPro" id="IPR042489">
    <property type="entry name" value="CapZ_alpha_1"/>
</dbReference>
<dbReference type="InterPro" id="IPR017865">
    <property type="entry name" value="F-actin_cap_asu_CS"/>
</dbReference>
<dbReference type="PANTHER" id="PTHR10653">
    <property type="entry name" value="F-ACTIN-CAPPING PROTEIN SUBUNIT ALPHA"/>
    <property type="match status" value="1"/>
</dbReference>
<dbReference type="PANTHER" id="PTHR10653:SF6">
    <property type="entry name" value="F-ACTIN-CAPPING PROTEIN SUBUNIT ALPHA-3"/>
    <property type="match status" value="1"/>
</dbReference>
<dbReference type="Pfam" id="PF01267">
    <property type="entry name" value="F-actin_cap_A"/>
    <property type="match status" value="1"/>
</dbReference>
<dbReference type="PRINTS" id="PR00191">
    <property type="entry name" value="FACTINCAPA"/>
</dbReference>
<dbReference type="SUPFAM" id="SSF90096">
    <property type="entry name" value="Subunits of heterodimeric actin filament capping protein Capz"/>
    <property type="match status" value="1"/>
</dbReference>
<dbReference type="PROSITE" id="PS00748">
    <property type="entry name" value="F_ACTIN_CAPPING_A_1"/>
    <property type="match status" value="1"/>
</dbReference>
<dbReference type="PROSITE" id="PS00749">
    <property type="entry name" value="F_ACTIN_CAPPING_A_2"/>
    <property type="match status" value="1"/>
</dbReference>
<protein>
    <recommendedName>
        <fullName>F-actin-capping protein subunit alpha-3</fullName>
    </recommendedName>
    <alternativeName>
        <fullName>CapZ alpha-3</fullName>
        <shortName>CP-alpha-3</shortName>
    </alternativeName>
    <alternativeName>
        <fullName>Germ cell-specific protein 3</fullName>
    </alternativeName>
</protein>
<evidence type="ECO:0000250" key="1"/>
<evidence type="ECO:0000250" key="2">
    <source>
        <dbReference type="UniProtKB" id="A0PFK5"/>
    </source>
</evidence>
<evidence type="ECO:0000250" key="3">
    <source>
        <dbReference type="UniProtKB" id="Q9WUV6"/>
    </source>
</evidence>
<evidence type="ECO:0000269" key="4">
    <source>
    </source>
</evidence>
<evidence type="ECO:0000269" key="5">
    <source>
    </source>
</evidence>
<evidence type="ECO:0000305" key="6"/>
<feature type="chain" id="PRO_0000208631" description="F-actin-capping protein subunit alpha-3">
    <location>
        <begin position="1"/>
        <end position="299"/>
    </location>
</feature>
<feature type="modified residue" description="Phosphoserine" evidence="3">
    <location>
        <position position="290"/>
    </location>
</feature>
<feature type="sequence conflict" description="In Ref. 3; AAH16745." evidence="6" ref="3">
    <original>D</original>
    <variation>Y</variation>
    <location>
        <position position="95"/>
    </location>
</feature>
<name>CAZA3_HUMAN</name>